<protein>
    <recommendedName>
        <fullName evidence="1">Large ribosomal subunit protein uL10</fullName>
    </recommendedName>
    <alternativeName>
        <fullName evidence="2">50S ribosomal protein L10</fullName>
    </alternativeName>
</protein>
<dbReference type="EMBL" id="CP001025">
    <property type="protein sequence ID" value="ACB62767.1"/>
    <property type="molecule type" value="Genomic_DNA"/>
</dbReference>
<dbReference type="RefSeq" id="WP_012362890.1">
    <property type="nucleotide sequence ID" value="NC_010551.1"/>
</dbReference>
<dbReference type="SMR" id="B1YRC0"/>
<dbReference type="KEGG" id="bac:BamMC406_0266"/>
<dbReference type="HOGENOM" id="CLU_092227_0_1_4"/>
<dbReference type="OrthoDB" id="9808307at2"/>
<dbReference type="Proteomes" id="UP000001680">
    <property type="component" value="Chromosome 1"/>
</dbReference>
<dbReference type="GO" id="GO:1990904">
    <property type="term" value="C:ribonucleoprotein complex"/>
    <property type="evidence" value="ECO:0007669"/>
    <property type="project" value="UniProtKB-KW"/>
</dbReference>
<dbReference type="GO" id="GO:0005840">
    <property type="term" value="C:ribosome"/>
    <property type="evidence" value="ECO:0007669"/>
    <property type="project" value="UniProtKB-KW"/>
</dbReference>
<dbReference type="GO" id="GO:0070180">
    <property type="term" value="F:large ribosomal subunit rRNA binding"/>
    <property type="evidence" value="ECO:0007669"/>
    <property type="project" value="UniProtKB-UniRule"/>
</dbReference>
<dbReference type="GO" id="GO:0006412">
    <property type="term" value="P:translation"/>
    <property type="evidence" value="ECO:0007669"/>
    <property type="project" value="UniProtKB-UniRule"/>
</dbReference>
<dbReference type="CDD" id="cd05797">
    <property type="entry name" value="Ribosomal_L10"/>
    <property type="match status" value="1"/>
</dbReference>
<dbReference type="Gene3D" id="3.30.70.1730">
    <property type="match status" value="1"/>
</dbReference>
<dbReference type="Gene3D" id="6.10.250.290">
    <property type="match status" value="1"/>
</dbReference>
<dbReference type="HAMAP" id="MF_00362">
    <property type="entry name" value="Ribosomal_uL10"/>
    <property type="match status" value="1"/>
</dbReference>
<dbReference type="InterPro" id="IPR001790">
    <property type="entry name" value="Ribosomal_uL10"/>
</dbReference>
<dbReference type="InterPro" id="IPR043141">
    <property type="entry name" value="Ribosomal_uL10-like_sf"/>
</dbReference>
<dbReference type="InterPro" id="IPR022973">
    <property type="entry name" value="Ribosomal_uL10_bac"/>
</dbReference>
<dbReference type="InterPro" id="IPR047865">
    <property type="entry name" value="Ribosomal_uL10_bac_type"/>
</dbReference>
<dbReference type="NCBIfam" id="NF000955">
    <property type="entry name" value="PRK00099.1-1"/>
    <property type="match status" value="1"/>
</dbReference>
<dbReference type="PANTHER" id="PTHR11560">
    <property type="entry name" value="39S RIBOSOMAL PROTEIN L10, MITOCHONDRIAL"/>
    <property type="match status" value="1"/>
</dbReference>
<dbReference type="Pfam" id="PF00466">
    <property type="entry name" value="Ribosomal_L10"/>
    <property type="match status" value="1"/>
</dbReference>
<dbReference type="SUPFAM" id="SSF160369">
    <property type="entry name" value="Ribosomal protein L10-like"/>
    <property type="match status" value="1"/>
</dbReference>
<evidence type="ECO:0000255" key="1">
    <source>
        <dbReference type="HAMAP-Rule" id="MF_00362"/>
    </source>
</evidence>
<evidence type="ECO:0000305" key="2"/>
<name>RL10_BURA4</name>
<gene>
    <name evidence="1" type="primary">rplJ</name>
    <name type="ordered locus">BamMC406_0266</name>
</gene>
<reference key="1">
    <citation type="submission" date="2008-04" db="EMBL/GenBank/DDBJ databases">
        <title>Complete sequence of chromosome 1 of Burkholderia ambifaria MC40-6.</title>
        <authorList>
            <person name="Copeland A."/>
            <person name="Lucas S."/>
            <person name="Lapidus A."/>
            <person name="Glavina del Rio T."/>
            <person name="Dalin E."/>
            <person name="Tice H."/>
            <person name="Pitluck S."/>
            <person name="Chain P."/>
            <person name="Malfatti S."/>
            <person name="Shin M."/>
            <person name="Vergez L."/>
            <person name="Lang D."/>
            <person name="Schmutz J."/>
            <person name="Larimer F."/>
            <person name="Land M."/>
            <person name="Hauser L."/>
            <person name="Kyrpides N."/>
            <person name="Lykidis A."/>
            <person name="Ramette A."/>
            <person name="Konstantinidis K."/>
            <person name="Tiedje J."/>
            <person name="Richardson P."/>
        </authorList>
    </citation>
    <scope>NUCLEOTIDE SEQUENCE [LARGE SCALE GENOMIC DNA]</scope>
    <source>
        <strain>MC40-6</strain>
    </source>
</reference>
<feature type="chain" id="PRO_1000120928" description="Large ribosomal subunit protein uL10">
    <location>
        <begin position="1"/>
        <end position="165"/>
    </location>
</feature>
<sequence length="165" mass="17609">MPLNREDKQAVVAEVAAQVAKAQTVVLAEYRGIAVGDLTKLRAQAREKQVYLRVLKNTLARRAVEGTPFAPLAEQMTGPLIYGISEDAIAAAKVVNDFSKSNDKLVIKAGSFDGKVMDKAGVQALASIPSREELLSKLLFVMQSPVSGFARALAALAEKKQAEAA</sequence>
<accession>B1YRC0</accession>
<proteinExistence type="inferred from homology"/>
<keyword id="KW-0687">Ribonucleoprotein</keyword>
<keyword id="KW-0689">Ribosomal protein</keyword>
<keyword id="KW-0694">RNA-binding</keyword>
<keyword id="KW-0699">rRNA-binding</keyword>
<comment type="function">
    <text evidence="1">Forms part of the ribosomal stalk, playing a central role in the interaction of the ribosome with GTP-bound translation factors.</text>
</comment>
<comment type="subunit">
    <text evidence="1">Part of the ribosomal stalk of the 50S ribosomal subunit. The N-terminus interacts with L11 and the large rRNA to form the base of the stalk. The C-terminus forms an elongated spine to which L12 dimers bind in a sequential fashion forming a multimeric L10(L12)X complex.</text>
</comment>
<comment type="similarity">
    <text evidence="1">Belongs to the universal ribosomal protein uL10 family.</text>
</comment>
<organism>
    <name type="scientific">Burkholderia ambifaria (strain MC40-6)</name>
    <dbReference type="NCBI Taxonomy" id="398577"/>
    <lineage>
        <taxon>Bacteria</taxon>
        <taxon>Pseudomonadati</taxon>
        <taxon>Pseudomonadota</taxon>
        <taxon>Betaproteobacteria</taxon>
        <taxon>Burkholderiales</taxon>
        <taxon>Burkholderiaceae</taxon>
        <taxon>Burkholderia</taxon>
        <taxon>Burkholderia cepacia complex</taxon>
    </lineage>
</organism>